<organism>
    <name type="scientific">Kosmotoga olearia (strain ATCC BAA-1733 / DSM 21960 / TBF 19.5.1)</name>
    <dbReference type="NCBI Taxonomy" id="521045"/>
    <lineage>
        <taxon>Bacteria</taxon>
        <taxon>Thermotogati</taxon>
        <taxon>Thermotogota</taxon>
        <taxon>Thermotogae</taxon>
        <taxon>Kosmotogales</taxon>
        <taxon>Kosmotogaceae</taxon>
        <taxon>Kosmotoga</taxon>
    </lineage>
</organism>
<reference key="1">
    <citation type="submission" date="2009-06" db="EMBL/GenBank/DDBJ databases">
        <title>Complete sequence of Thermotogales bacterium TBF 19.5.1.</title>
        <authorList>
            <consortium name="US DOE Joint Genome Institute"/>
            <person name="Lucas S."/>
            <person name="Copeland A."/>
            <person name="Lapidus A."/>
            <person name="Glavina del Rio T."/>
            <person name="Tice H."/>
            <person name="Bruce D."/>
            <person name="Goodwin L."/>
            <person name="Pitluck S."/>
            <person name="Chertkov O."/>
            <person name="Brettin T."/>
            <person name="Detter J.C."/>
            <person name="Han C."/>
            <person name="Schmutz J."/>
            <person name="Larimer F."/>
            <person name="Land M."/>
            <person name="Hauser L."/>
            <person name="Kyrpides N."/>
            <person name="Ovchinnikova G."/>
            <person name="Noll K."/>
        </authorList>
    </citation>
    <scope>NUCLEOTIDE SEQUENCE [LARGE SCALE GENOMIC DNA]</scope>
    <source>
        <strain>ATCC BAA-1733 / DSM 21960 / TBF 19.5.1</strain>
    </source>
</reference>
<gene>
    <name evidence="1" type="primary">dapH</name>
    <name type="ordered locus">Kole_0104</name>
</gene>
<sequence>MNAETIIKMIKDSKKKTPAVCYVSGNLEGLETGTLNFVGGKDFGVIIGDFKEIQDLIARERERITGYHIDIQARNSALPLADLTKYEARIEPGAIIRDLVEIGKGAVIMMGAVINIGAVIGKGTMIDMNAVIGGRAIIGDNCHIGAGAVVAGVIEPPSATPVIIEDNVLVGANAVILEGVRVGANSVVAAGAVVTKDVPSGTVVAGIPAKVIKAFDATTADKTKIVQDLREL</sequence>
<dbReference type="EC" id="2.3.1.89" evidence="1"/>
<dbReference type="EMBL" id="CP001634">
    <property type="protein sequence ID" value="ACR78832.1"/>
    <property type="molecule type" value="Genomic_DNA"/>
</dbReference>
<dbReference type="RefSeq" id="WP_012744620.1">
    <property type="nucleotide sequence ID" value="NC_012785.1"/>
</dbReference>
<dbReference type="SMR" id="C5CHX7"/>
<dbReference type="STRING" id="521045.Kole_0104"/>
<dbReference type="KEGG" id="kol:Kole_0104"/>
<dbReference type="eggNOG" id="COG2171">
    <property type="taxonomic scope" value="Bacteria"/>
</dbReference>
<dbReference type="HOGENOM" id="CLU_103751_0_0_0"/>
<dbReference type="OrthoDB" id="9788080at2"/>
<dbReference type="UniPathway" id="UPA00034">
    <property type="reaction ID" value="UER00022"/>
</dbReference>
<dbReference type="Proteomes" id="UP000002382">
    <property type="component" value="Chromosome"/>
</dbReference>
<dbReference type="GO" id="GO:0047200">
    <property type="term" value="F:tetrahydrodipicolinate N-acetyltransferase activity"/>
    <property type="evidence" value="ECO:0007669"/>
    <property type="project" value="UniProtKB-EC"/>
</dbReference>
<dbReference type="GO" id="GO:0019877">
    <property type="term" value="P:diaminopimelate biosynthetic process"/>
    <property type="evidence" value="ECO:0007669"/>
    <property type="project" value="UniProtKB-UniRule"/>
</dbReference>
<dbReference type="GO" id="GO:0009089">
    <property type="term" value="P:lysine biosynthetic process via diaminopimelate"/>
    <property type="evidence" value="ECO:0007669"/>
    <property type="project" value="UniProtKB-UniRule"/>
</dbReference>
<dbReference type="CDD" id="cd03350">
    <property type="entry name" value="LbH_THP_succinylT"/>
    <property type="match status" value="1"/>
</dbReference>
<dbReference type="Gene3D" id="2.160.10.10">
    <property type="entry name" value="Hexapeptide repeat proteins"/>
    <property type="match status" value="1"/>
</dbReference>
<dbReference type="Gene3D" id="3.30.70.250">
    <property type="entry name" value="Malonyl-CoA ACP transacylase, ACP-binding"/>
    <property type="match status" value="1"/>
</dbReference>
<dbReference type="HAMAP" id="MF_01691">
    <property type="entry name" value="DapH"/>
    <property type="match status" value="1"/>
</dbReference>
<dbReference type="InterPro" id="IPR019873">
    <property type="entry name" value="DapH"/>
</dbReference>
<dbReference type="InterPro" id="IPR013710">
    <property type="entry name" value="DapH_N"/>
</dbReference>
<dbReference type="InterPro" id="IPR001451">
    <property type="entry name" value="Hexapep"/>
</dbReference>
<dbReference type="InterPro" id="IPR018357">
    <property type="entry name" value="Hexapep_transf_CS"/>
</dbReference>
<dbReference type="InterPro" id="IPR050179">
    <property type="entry name" value="Trans_hexapeptide_repeat"/>
</dbReference>
<dbReference type="InterPro" id="IPR011004">
    <property type="entry name" value="Trimer_LpxA-like_sf"/>
</dbReference>
<dbReference type="NCBIfam" id="TIGR03532">
    <property type="entry name" value="DapD_Ac"/>
    <property type="match status" value="1"/>
</dbReference>
<dbReference type="PANTHER" id="PTHR43300:SF10">
    <property type="entry name" value="2,3,4,5-TETRAHYDROPYRIDINE-2,6-DICARBOXYLATE N-ACETYLTRANSFERASE"/>
    <property type="match status" value="1"/>
</dbReference>
<dbReference type="PANTHER" id="PTHR43300">
    <property type="entry name" value="ACETYLTRANSFERASE"/>
    <property type="match status" value="1"/>
</dbReference>
<dbReference type="Pfam" id="PF08503">
    <property type="entry name" value="DapH_N"/>
    <property type="match status" value="1"/>
</dbReference>
<dbReference type="Pfam" id="PF00132">
    <property type="entry name" value="Hexapep"/>
    <property type="match status" value="1"/>
</dbReference>
<dbReference type="Pfam" id="PF14602">
    <property type="entry name" value="Hexapep_2"/>
    <property type="match status" value="1"/>
</dbReference>
<dbReference type="SUPFAM" id="SSF51161">
    <property type="entry name" value="Trimeric LpxA-like enzymes"/>
    <property type="match status" value="1"/>
</dbReference>
<dbReference type="PROSITE" id="PS00101">
    <property type="entry name" value="HEXAPEP_TRANSFERASES"/>
    <property type="match status" value="1"/>
</dbReference>
<comment type="function">
    <text evidence="1">Catalyzes the transfer of an acetyl group from acetyl-CoA to tetrahydrodipicolinate.</text>
</comment>
<comment type="catalytic activity">
    <reaction evidence="1">
        <text>(S)-2,3,4,5-tetrahydrodipicolinate + acetyl-CoA + H2O = L-2-acetamido-6-oxoheptanedioate + CoA</text>
        <dbReference type="Rhea" id="RHEA:13085"/>
        <dbReference type="ChEBI" id="CHEBI:15377"/>
        <dbReference type="ChEBI" id="CHEBI:16845"/>
        <dbReference type="ChEBI" id="CHEBI:57287"/>
        <dbReference type="ChEBI" id="CHEBI:57288"/>
        <dbReference type="ChEBI" id="CHEBI:58117"/>
        <dbReference type="EC" id="2.3.1.89"/>
    </reaction>
</comment>
<comment type="pathway">
    <text evidence="1">Amino-acid biosynthesis; L-lysine biosynthesis via DAP pathway; LL-2,6-diaminopimelate from (S)-tetrahydrodipicolinate (acetylase route): step 1/3.</text>
</comment>
<comment type="similarity">
    <text evidence="1">Belongs to the transferase hexapeptide repeat family. DapH subfamily.</text>
</comment>
<keyword id="KW-0012">Acyltransferase</keyword>
<keyword id="KW-0028">Amino-acid biosynthesis</keyword>
<keyword id="KW-0220">Diaminopimelate biosynthesis</keyword>
<keyword id="KW-0457">Lysine biosynthesis</keyword>
<keyword id="KW-1185">Reference proteome</keyword>
<keyword id="KW-0677">Repeat</keyword>
<keyword id="KW-0808">Transferase</keyword>
<accession>C5CHX7</accession>
<evidence type="ECO:0000255" key="1">
    <source>
        <dbReference type="HAMAP-Rule" id="MF_01691"/>
    </source>
</evidence>
<protein>
    <recommendedName>
        <fullName evidence="1">2,3,4,5-tetrahydropyridine-2,6-dicarboxylate N-acetyltransferase</fullName>
        <ecNumber evidence="1">2.3.1.89</ecNumber>
    </recommendedName>
    <alternativeName>
        <fullName evidence="1">Tetrahydrodipicolinate N-acetyltransferase</fullName>
        <shortName evidence="1">THP acetyltransferase</shortName>
        <shortName evidence="1">Tetrahydropicolinate acetylase</shortName>
    </alternativeName>
</protein>
<proteinExistence type="inferred from homology"/>
<feature type="chain" id="PRO_1000215930" description="2,3,4,5-tetrahydropyridine-2,6-dicarboxylate N-acetyltransferase">
    <location>
        <begin position="1"/>
        <end position="232"/>
    </location>
</feature>
<name>DAPH_KOSOT</name>